<accession>A9L4F4</accession>
<sequence length="212" mass="24032">MNSQQCVIIAIAGASASGKSLIAKTIFDELRRDLGTDQIGVINEDAYYRDQSHLSMDERVLTNYDHPKALDHQLLCTHLQLLKSGEAVDIPCYSYTEHTRIAETLTMTPKKVIILEGILLLTDPKLRALMDASVFMDTPLDICFLRRLTRDVAERGRTMESVISQYKKTVRPMFLQFIEPSKQYADIIVPRGGKNRIATDILKTRIQHLLAK</sequence>
<evidence type="ECO:0000255" key="1">
    <source>
        <dbReference type="HAMAP-Rule" id="MF_00551"/>
    </source>
</evidence>
<protein>
    <recommendedName>
        <fullName evidence="1">Uridine kinase</fullName>
        <ecNumber evidence="1">2.7.1.48</ecNumber>
    </recommendedName>
    <alternativeName>
        <fullName evidence="1">Cytidine monophosphokinase</fullName>
    </alternativeName>
    <alternativeName>
        <fullName evidence="1">Uridine monophosphokinase</fullName>
    </alternativeName>
</protein>
<comment type="catalytic activity">
    <reaction evidence="1">
        <text>uridine + ATP = UMP + ADP + H(+)</text>
        <dbReference type="Rhea" id="RHEA:16825"/>
        <dbReference type="ChEBI" id="CHEBI:15378"/>
        <dbReference type="ChEBI" id="CHEBI:16704"/>
        <dbReference type="ChEBI" id="CHEBI:30616"/>
        <dbReference type="ChEBI" id="CHEBI:57865"/>
        <dbReference type="ChEBI" id="CHEBI:456216"/>
        <dbReference type="EC" id="2.7.1.48"/>
    </reaction>
</comment>
<comment type="catalytic activity">
    <reaction evidence="1">
        <text>cytidine + ATP = CMP + ADP + H(+)</text>
        <dbReference type="Rhea" id="RHEA:24674"/>
        <dbReference type="ChEBI" id="CHEBI:15378"/>
        <dbReference type="ChEBI" id="CHEBI:17562"/>
        <dbReference type="ChEBI" id="CHEBI:30616"/>
        <dbReference type="ChEBI" id="CHEBI:60377"/>
        <dbReference type="ChEBI" id="CHEBI:456216"/>
        <dbReference type="EC" id="2.7.1.48"/>
    </reaction>
</comment>
<comment type="pathway">
    <text evidence="1">Pyrimidine metabolism; CTP biosynthesis via salvage pathway; CTP from cytidine: step 1/3.</text>
</comment>
<comment type="pathway">
    <text evidence="1">Pyrimidine metabolism; UMP biosynthesis via salvage pathway; UMP from uridine: step 1/1.</text>
</comment>
<comment type="subcellular location">
    <subcellularLocation>
        <location evidence="1">Cytoplasm</location>
    </subcellularLocation>
</comment>
<comment type="similarity">
    <text evidence="1">Belongs to the uridine kinase family.</text>
</comment>
<proteinExistence type="inferred from homology"/>
<organism>
    <name type="scientific">Shewanella baltica (strain OS195)</name>
    <dbReference type="NCBI Taxonomy" id="399599"/>
    <lineage>
        <taxon>Bacteria</taxon>
        <taxon>Pseudomonadati</taxon>
        <taxon>Pseudomonadota</taxon>
        <taxon>Gammaproteobacteria</taxon>
        <taxon>Alteromonadales</taxon>
        <taxon>Shewanellaceae</taxon>
        <taxon>Shewanella</taxon>
    </lineage>
</organism>
<name>URK_SHEB9</name>
<dbReference type="EC" id="2.7.1.48" evidence="1"/>
<dbReference type="EMBL" id="CP000891">
    <property type="protein sequence ID" value="ABX49744.1"/>
    <property type="molecule type" value="Genomic_DNA"/>
</dbReference>
<dbReference type="RefSeq" id="WP_006081926.1">
    <property type="nucleotide sequence ID" value="NC_009997.1"/>
</dbReference>
<dbReference type="SMR" id="A9L4F4"/>
<dbReference type="GeneID" id="11772675"/>
<dbReference type="KEGG" id="sbn:Sbal195_2576"/>
<dbReference type="HOGENOM" id="CLU_021278_1_2_6"/>
<dbReference type="UniPathway" id="UPA00574">
    <property type="reaction ID" value="UER00637"/>
</dbReference>
<dbReference type="UniPathway" id="UPA00579">
    <property type="reaction ID" value="UER00640"/>
</dbReference>
<dbReference type="Proteomes" id="UP000000770">
    <property type="component" value="Chromosome"/>
</dbReference>
<dbReference type="GO" id="GO:0005737">
    <property type="term" value="C:cytoplasm"/>
    <property type="evidence" value="ECO:0007669"/>
    <property type="project" value="UniProtKB-SubCell"/>
</dbReference>
<dbReference type="GO" id="GO:0005524">
    <property type="term" value="F:ATP binding"/>
    <property type="evidence" value="ECO:0007669"/>
    <property type="project" value="UniProtKB-UniRule"/>
</dbReference>
<dbReference type="GO" id="GO:0043771">
    <property type="term" value="F:cytidine kinase activity"/>
    <property type="evidence" value="ECO:0007669"/>
    <property type="project" value="RHEA"/>
</dbReference>
<dbReference type="GO" id="GO:0004849">
    <property type="term" value="F:uridine kinase activity"/>
    <property type="evidence" value="ECO:0007669"/>
    <property type="project" value="UniProtKB-UniRule"/>
</dbReference>
<dbReference type="GO" id="GO:0044211">
    <property type="term" value="P:CTP salvage"/>
    <property type="evidence" value="ECO:0007669"/>
    <property type="project" value="UniProtKB-UniRule"/>
</dbReference>
<dbReference type="GO" id="GO:0044206">
    <property type="term" value="P:UMP salvage"/>
    <property type="evidence" value="ECO:0007669"/>
    <property type="project" value="UniProtKB-UniRule"/>
</dbReference>
<dbReference type="CDD" id="cd02023">
    <property type="entry name" value="UMPK"/>
    <property type="match status" value="1"/>
</dbReference>
<dbReference type="Gene3D" id="3.40.50.300">
    <property type="entry name" value="P-loop containing nucleotide triphosphate hydrolases"/>
    <property type="match status" value="1"/>
</dbReference>
<dbReference type="HAMAP" id="MF_00551">
    <property type="entry name" value="Uridine_kinase"/>
    <property type="match status" value="1"/>
</dbReference>
<dbReference type="InterPro" id="IPR027417">
    <property type="entry name" value="P-loop_NTPase"/>
</dbReference>
<dbReference type="InterPro" id="IPR006083">
    <property type="entry name" value="PRK/URK"/>
</dbReference>
<dbReference type="InterPro" id="IPR026008">
    <property type="entry name" value="Uridine_kinase"/>
</dbReference>
<dbReference type="InterPro" id="IPR000764">
    <property type="entry name" value="Uridine_kinase-like"/>
</dbReference>
<dbReference type="NCBIfam" id="NF004018">
    <property type="entry name" value="PRK05480.1"/>
    <property type="match status" value="1"/>
</dbReference>
<dbReference type="NCBIfam" id="TIGR00235">
    <property type="entry name" value="udk"/>
    <property type="match status" value="1"/>
</dbReference>
<dbReference type="PANTHER" id="PTHR10285">
    <property type="entry name" value="URIDINE KINASE"/>
    <property type="match status" value="1"/>
</dbReference>
<dbReference type="Pfam" id="PF00485">
    <property type="entry name" value="PRK"/>
    <property type="match status" value="1"/>
</dbReference>
<dbReference type="PRINTS" id="PR00988">
    <property type="entry name" value="URIDINKINASE"/>
</dbReference>
<dbReference type="SUPFAM" id="SSF52540">
    <property type="entry name" value="P-loop containing nucleoside triphosphate hydrolases"/>
    <property type="match status" value="1"/>
</dbReference>
<feature type="chain" id="PRO_1000081970" description="Uridine kinase">
    <location>
        <begin position="1"/>
        <end position="212"/>
    </location>
</feature>
<feature type="binding site" evidence="1">
    <location>
        <begin position="13"/>
        <end position="20"/>
    </location>
    <ligand>
        <name>ATP</name>
        <dbReference type="ChEBI" id="CHEBI:30616"/>
    </ligand>
</feature>
<gene>
    <name evidence="1" type="primary">udk</name>
    <name type="ordered locus">Sbal195_2576</name>
</gene>
<reference key="1">
    <citation type="submission" date="2007-11" db="EMBL/GenBank/DDBJ databases">
        <title>Complete sequence of chromosome of Shewanella baltica OS195.</title>
        <authorList>
            <consortium name="US DOE Joint Genome Institute"/>
            <person name="Copeland A."/>
            <person name="Lucas S."/>
            <person name="Lapidus A."/>
            <person name="Barry K."/>
            <person name="Glavina del Rio T."/>
            <person name="Dalin E."/>
            <person name="Tice H."/>
            <person name="Pitluck S."/>
            <person name="Chain P."/>
            <person name="Malfatti S."/>
            <person name="Shin M."/>
            <person name="Vergez L."/>
            <person name="Schmutz J."/>
            <person name="Larimer F."/>
            <person name="Land M."/>
            <person name="Hauser L."/>
            <person name="Kyrpides N."/>
            <person name="Kim E."/>
            <person name="Brettar I."/>
            <person name="Rodrigues J."/>
            <person name="Konstantinidis K."/>
            <person name="Klappenbach J."/>
            <person name="Hofle M."/>
            <person name="Tiedje J."/>
            <person name="Richardson P."/>
        </authorList>
    </citation>
    <scope>NUCLEOTIDE SEQUENCE [LARGE SCALE GENOMIC DNA]</scope>
    <source>
        <strain>OS195</strain>
    </source>
</reference>
<keyword id="KW-0067">ATP-binding</keyword>
<keyword id="KW-0963">Cytoplasm</keyword>
<keyword id="KW-0418">Kinase</keyword>
<keyword id="KW-0547">Nucleotide-binding</keyword>
<keyword id="KW-0808">Transferase</keyword>